<protein>
    <recommendedName>
        <fullName evidence="1 3">Epoxyqueuosine reductase QueH</fullName>
        <ecNumber evidence="1 5">1.17.99.6</ecNumber>
    </recommendedName>
    <alternativeName>
        <fullName evidence="1 4">Queuosine biosynthesis protein QueH</fullName>
    </alternativeName>
</protein>
<name>QUEH_STRP1</name>
<dbReference type="EC" id="1.17.99.6" evidence="1 5"/>
<dbReference type="EMBL" id="AE004092">
    <property type="protein sequence ID" value="AAK33314.1"/>
    <property type="molecule type" value="Genomic_DNA"/>
</dbReference>
<dbReference type="RefSeq" id="NP_268593.1">
    <property type="nucleotide sequence ID" value="NC_002737.2"/>
</dbReference>
<dbReference type="SMR" id="Q9A1K3"/>
<dbReference type="PaxDb" id="1314-HKU360_00239"/>
<dbReference type="KEGG" id="spy:SPy_0233"/>
<dbReference type="PATRIC" id="fig|160490.10.peg.206"/>
<dbReference type="HOGENOM" id="CLU_088177_1_0_9"/>
<dbReference type="OMA" id="PNIHPYT"/>
<dbReference type="UniPathway" id="UPA00392"/>
<dbReference type="Proteomes" id="UP000000750">
    <property type="component" value="Chromosome"/>
</dbReference>
<dbReference type="GO" id="GO:0051539">
    <property type="term" value="F:4 iron, 4 sulfur cluster binding"/>
    <property type="evidence" value="ECO:0007669"/>
    <property type="project" value="UniProtKB-UniRule"/>
</dbReference>
<dbReference type="GO" id="GO:0052693">
    <property type="term" value="F:epoxyqueuosine reductase activity"/>
    <property type="evidence" value="ECO:0007669"/>
    <property type="project" value="UniProtKB-UniRule"/>
</dbReference>
<dbReference type="GO" id="GO:0046872">
    <property type="term" value="F:metal ion binding"/>
    <property type="evidence" value="ECO:0007669"/>
    <property type="project" value="UniProtKB-KW"/>
</dbReference>
<dbReference type="GO" id="GO:0008616">
    <property type="term" value="P:queuosine biosynthetic process"/>
    <property type="evidence" value="ECO:0007669"/>
    <property type="project" value="UniProtKB-UniRule"/>
</dbReference>
<dbReference type="GO" id="GO:0006400">
    <property type="term" value="P:tRNA modification"/>
    <property type="evidence" value="ECO:0007669"/>
    <property type="project" value="UniProtKB-UniRule"/>
</dbReference>
<dbReference type="HAMAP" id="MF_02089">
    <property type="entry name" value="QueH"/>
    <property type="match status" value="1"/>
</dbReference>
<dbReference type="InterPro" id="IPR003828">
    <property type="entry name" value="QueH"/>
</dbReference>
<dbReference type="PANTHER" id="PTHR36701">
    <property type="entry name" value="EPOXYQUEUOSINE REDUCTASE QUEH"/>
    <property type="match status" value="1"/>
</dbReference>
<dbReference type="PANTHER" id="PTHR36701:SF1">
    <property type="entry name" value="EPOXYQUEUOSINE REDUCTASE QUEH"/>
    <property type="match status" value="1"/>
</dbReference>
<dbReference type="Pfam" id="PF02677">
    <property type="entry name" value="QueH"/>
    <property type="match status" value="1"/>
</dbReference>
<keyword id="KW-0004">4Fe-4S</keyword>
<keyword id="KW-1015">Disulfide bond</keyword>
<keyword id="KW-0408">Iron</keyword>
<keyword id="KW-0411">Iron-sulfur</keyword>
<keyword id="KW-0479">Metal-binding</keyword>
<keyword id="KW-0560">Oxidoreductase</keyword>
<keyword id="KW-0671">Queuosine biosynthesis</keyword>
<keyword id="KW-0676">Redox-active center</keyword>
<keyword id="KW-1185">Reference proteome</keyword>
<keyword id="KW-0819">tRNA processing</keyword>
<reference key="1">
    <citation type="journal article" date="2001" name="Proc. Natl. Acad. Sci. U.S.A.">
        <title>Complete genome sequence of an M1 strain of Streptococcus pyogenes.</title>
        <authorList>
            <person name="Ferretti J.J."/>
            <person name="McShan W.M."/>
            <person name="Ajdic D.J."/>
            <person name="Savic D.J."/>
            <person name="Savic G."/>
            <person name="Lyon K."/>
            <person name="Primeaux C."/>
            <person name="Sezate S."/>
            <person name="Suvorov A.N."/>
            <person name="Kenton S."/>
            <person name="Lai H.S."/>
            <person name="Lin S.P."/>
            <person name="Qian Y."/>
            <person name="Jia H.G."/>
            <person name="Najar F.Z."/>
            <person name="Ren Q."/>
            <person name="Zhu H."/>
            <person name="Song L."/>
            <person name="White J."/>
            <person name="Yuan X."/>
            <person name="Clifton S.W."/>
            <person name="Roe B.A."/>
            <person name="McLaughlin R.E."/>
        </authorList>
    </citation>
    <scope>NUCLEOTIDE SEQUENCE [LARGE SCALE GENOMIC DNA]</scope>
    <source>
        <strain>ATCC 700294 / SF370 / Serotype M1</strain>
    </source>
</reference>
<reference key="2">
    <citation type="journal article" date="2017" name="ACS Chem. Biol.">
        <title>Identification of a novel epoxyqueuosine reductase family by comparative genomics.</title>
        <authorList>
            <person name="Zallot R."/>
            <person name="Ross R."/>
            <person name="Chen W.H."/>
            <person name="Bruner S.D."/>
            <person name="Limbach P.A."/>
            <person name="de Crecy-Lagard V."/>
        </authorList>
    </citation>
    <scope>FUNCTION</scope>
    <scope>CATALYTIC ACTIVITY</scope>
    <scope>PATHWAY</scope>
</reference>
<evidence type="ECO:0000255" key="1">
    <source>
        <dbReference type="HAMAP-Rule" id="MF_02089"/>
    </source>
</evidence>
<evidence type="ECO:0000269" key="2">
    <source>
    </source>
</evidence>
<evidence type="ECO:0000303" key="3">
    <source>
    </source>
</evidence>
<evidence type="ECO:0000305" key="4"/>
<evidence type="ECO:0000305" key="5">
    <source>
    </source>
</evidence>
<evidence type="ECO:0000312" key="6">
    <source>
        <dbReference type="EMBL" id="AAK33314.1"/>
    </source>
</evidence>
<accession>Q9A1K3</accession>
<accession>Q491A1</accession>
<proteinExistence type="evidence at protein level"/>
<comment type="function">
    <text evidence="1 2">Catalyzes the conversion of epoxyqueuosine (oQ) to queuosine (Q), which is a hypermodified base found in the wobble positions of tRNA(Asp), tRNA(Asn), tRNA(His) and tRNA(Tyr).</text>
</comment>
<comment type="catalytic activity">
    <reaction evidence="1 5">
        <text>epoxyqueuosine(34) in tRNA + AH2 = queuosine(34) in tRNA + A + H2O</text>
        <dbReference type="Rhea" id="RHEA:32159"/>
        <dbReference type="Rhea" id="RHEA-COMP:18571"/>
        <dbReference type="Rhea" id="RHEA-COMP:18582"/>
        <dbReference type="ChEBI" id="CHEBI:13193"/>
        <dbReference type="ChEBI" id="CHEBI:15377"/>
        <dbReference type="ChEBI" id="CHEBI:17499"/>
        <dbReference type="ChEBI" id="CHEBI:194431"/>
        <dbReference type="ChEBI" id="CHEBI:194443"/>
        <dbReference type="EC" id="1.17.99.6"/>
    </reaction>
</comment>
<comment type="pathway">
    <text evidence="1 5">tRNA modification; tRNA-queuosine biosynthesis.</text>
</comment>
<comment type="similarity">
    <text evidence="1 4">Belongs to the QueH family.</text>
</comment>
<feature type="chain" id="PRO_0000439905" description="Epoxyqueuosine reductase QueH">
    <location>
        <begin position="1"/>
        <end position="255"/>
    </location>
</feature>
<feature type="binding site" evidence="1">
    <location>
        <position position="44"/>
    </location>
    <ligand>
        <name>[4Fe-4S] cluster</name>
        <dbReference type="ChEBI" id="CHEBI:49883"/>
    </ligand>
</feature>
<feature type="binding site" evidence="1">
    <location>
        <position position="45"/>
    </location>
    <ligand>
        <name>[4Fe-4S] cluster</name>
        <dbReference type="ChEBI" id="CHEBI:49883"/>
    </ligand>
</feature>
<feature type="binding site" evidence="1">
    <location>
        <position position="128"/>
    </location>
    <ligand>
        <name>[4Fe-4S] cluster</name>
        <dbReference type="ChEBI" id="CHEBI:49883"/>
    </ligand>
</feature>
<feature type="binding site" evidence="1">
    <location>
        <position position="131"/>
    </location>
    <ligand>
        <name>[4Fe-4S] cluster</name>
        <dbReference type="ChEBI" id="CHEBI:49883"/>
    </ligand>
</feature>
<feature type="disulfide bond" description="Redox-active" evidence="1">
    <location>
        <begin position="210"/>
        <end position="212"/>
    </location>
</feature>
<gene>
    <name evidence="1 3" type="primary">queH</name>
    <name evidence="6" type="ordered locus">SPy_0233</name>
</gene>
<organism>
    <name type="scientific">Streptococcus pyogenes serotype M1</name>
    <dbReference type="NCBI Taxonomy" id="301447"/>
    <lineage>
        <taxon>Bacteria</taxon>
        <taxon>Bacillati</taxon>
        <taxon>Bacillota</taxon>
        <taxon>Bacilli</taxon>
        <taxon>Lactobacillales</taxon>
        <taxon>Streptococcaceae</taxon>
        <taxon>Streptococcus</taxon>
    </lineage>
</organism>
<sequence>MIDLQEILANMNPNQKINYDRVMQQMAKVWEKESVRPSILMHVCCAPCSTYTLEYLTQFADITVYFANSNIHPKDEYHRRAYVTQQFVSEFNAKTGNTVQFLEADYVPNEYVRQVRGLEEEPEGGDRCRVCFDYRLDKTAQKAVELGFDYFASALTISPHKNSQTINDVGIDVQKVYTTKYLPSDFKKNNGYRRSVEMCEEYDIYRQCYCGCVYAAKMQGIDLVQVKKDAKAFMADKDLDNDFTHIRFSYRGDEM</sequence>